<feature type="chain" id="PRO_0000287273" description="Pre-mRNA-splicing factor 38A">
    <location>
        <begin position="1"/>
        <end position="312"/>
    </location>
</feature>
<feature type="region of interest" description="N-terminal protein interaction domain" evidence="1">
    <location>
        <begin position="1"/>
        <end position="179"/>
    </location>
</feature>
<feature type="region of interest" description="Disordered" evidence="3">
    <location>
        <begin position="181"/>
        <end position="312"/>
    </location>
</feature>
<feature type="coiled-coil region" evidence="2">
    <location>
        <begin position="170"/>
        <end position="204"/>
    </location>
</feature>
<feature type="compositionally biased region" description="Acidic residues" evidence="3">
    <location>
        <begin position="184"/>
        <end position="202"/>
    </location>
</feature>
<feature type="compositionally biased region" description="Basic and acidic residues" evidence="3">
    <location>
        <begin position="203"/>
        <end position="224"/>
    </location>
</feature>
<feature type="compositionally biased region" description="Basic residues" evidence="3">
    <location>
        <begin position="225"/>
        <end position="294"/>
    </location>
</feature>
<feature type="compositionally biased region" description="Basic residues" evidence="3">
    <location>
        <begin position="301"/>
        <end position="312"/>
    </location>
</feature>
<feature type="modified residue" description="Phosphoserine" evidence="1">
    <location>
        <position position="11"/>
    </location>
</feature>
<feature type="modified residue" description="Phosphoserine" evidence="1">
    <location>
        <position position="193"/>
    </location>
</feature>
<feature type="modified residue" description="Phosphoserine" evidence="1">
    <location>
        <position position="194"/>
    </location>
</feature>
<feature type="modified residue" description="Phosphoserine" evidence="1">
    <location>
        <position position="209"/>
    </location>
</feature>
<feature type="modified residue" description="Phosphoserine" evidence="1">
    <location>
        <position position="226"/>
    </location>
</feature>
<dbReference type="EMBL" id="AB097549">
    <property type="protein sequence ID" value="BAC41774.1"/>
    <property type="molecule type" value="mRNA"/>
</dbReference>
<dbReference type="EMBL" id="AB169172">
    <property type="protein sequence ID" value="BAE01264.1"/>
    <property type="molecule type" value="mRNA"/>
</dbReference>
<dbReference type="RefSeq" id="NP_001274229.1">
    <property type="nucleotide sequence ID" value="NM_001287300.1"/>
</dbReference>
<dbReference type="RefSeq" id="XP_045242250.1">
    <property type="nucleotide sequence ID" value="XM_045386315.2"/>
</dbReference>
<dbReference type="SMR" id="Q8HXH6"/>
<dbReference type="STRING" id="9541.ENSMFAP00000044152"/>
<dbReference type="Ensembl" id="ENSMFAT00000018448.2">
    <property type="protein sequence ID" value="ENSMFAP00000044155.2"/>
    <property type="gene ID" value="ENSMFAG00000039449.2"/>
</dbReference>
<dbReference type="GeneID" id="102116944"/>
<dbReference type="VEuPathDB" id="HostDB:ENSMFAG00000039449"/>
<dbReference type="eggNOG" id="KOG2889">
    <property type="taxonomic scope" value="Eukaryota"/>
</dbReference>
<dbReference type="GeneTree" id="ENSGT00730000111085"/>
<dbReference type="OMA" id="HTYWKEQ"/>
<dbReference type="Proteomes" id="UP000233100">
    <property type="component" value="Chromosome 1"/>
</dbReference>
<dbReference type="Bgee" id="ENSMFAG00000039449">
    <property type="expression patterns" value="Expressed in bone marrow and 13 other cell types or tissues"/>
</dbReference>
<dbReference type="GO" id="GO:0005654">
    <property type="term" value="C:nucleoplasm"/>
    <property type="evidence" value="ECO:0007669"/>
    <property type="project" value="Ensembl"/>
</dbReference>
<dbReference type="GO" id="GO:0005634">
    <property type="term" value="C:nucleus"/>
    <property type="evidence" value="ECO:0000250"/>
    <property type="project" value="UniProtKB"/>
</dbReference>
<dbReference type="GO" id="GO:0071005">
    <property type="term" value="C:U2-type precatalytic spliceosome"/>
    <property type="evidence" value="ECO:0000250"/>
    <property type="project" value="UniProtKB"/>
</dbReference>
<dbReference type="GO" id="GO:0000398">
    <property type="term" value="P:mRNA splicing, via spliceosome"/>
    <property type="evidence" value="ECO:0000250"/>
    <property type="project" value="UniProtKB"/>
</dbReference>
<dbReference type="InterPro" id="IPR005037">
    <property type="entry name" value="PRP38"/>
</dbReference>
<dbReference type="InterPro" id="IPR024767">
    <property type="entry name" value="PRP38_C"/>
</dbReference>
<dbReference type="PANTHER" id="PTHR23142">
    <property type="entry name" value="PRE-MRNA-SPLICING FACTOR 38A-RELATED"/>
    <property type="match status" value="1"/>
</dbReference>
<dbReference type="Pfam" id="PF03371">
    <property type="entry name" value="PRP38"/>
    <property type="match status" value="1"/>
</dbReference>
<dbReference type="Pfam" id="PF12871">
    <property type="entry name" value="PRP38_assoc"/>
    <property type="match status" value="1"/>
</dbReference>
<comment type="function">
    <text evidence="1">Involved in pre-mRNA splicing as a component of the spliceosome.</text>
</comment>
<comment type="subunit">
    <text evidence="1">Component of the spliceosome B complex. Interacts (via N-terminal interaction domain) with ZMAT2 and MFAP1.</text>
</comment>
<comment type="subcellular location">
    <subcellularLocation>
        <location evidence="1">Nucleus</location>
    </subcellularLocation>
</comment>
<comment type="similarity">
    <text evidence="4">Belongs to the PRP38 family.</text>
</comment>
<keyword id="KW-0175">Coiled coil</keyword>
<keyword id="KW-0507">mRNA processing</keyword>
<keyword id="KW-0508">mRNA splicing</keyword>
<keyword id="KW-0539">Nucleus</keyword>
<keyword id="KW-0597">Phosphoprotein</keyword>
<keyword id="KW-1185">Reference proteome</keyword>
<keyword id="KW-0747">Spliceosome</keyword>
<reference key="1">
    <citation type="journal article" date="2001" name="Gene">
        <title>Assignment of 118 novel cDNAs of cynomolgus monkey brain to human chromosomes.</title>
        <authorList>
            <person name="Osada N."/>
            <person name="Hida M."/>
            <person name="Kususda J."/>
            <person name="Tanuma R."/>
            <person name="Iseki K."/>
            <person name="Hirata M."/>
            <person name="Suto Y."/>
            <person name="Hirai M."/>
            <person name="Terao K."/>
            <person name="Suzuki Y."/>
            <person name="Sugano S."/>
            <person name="Hashimoto K."/>
        </authorList>
    </citation>
    <scope>NUCLEOTIDE SEQUENCE [LARGE SCALE MRNA]</scope>
    <source>
        <tissue>Medulla oblongata</tissue>
    </source>
</reference>
<reference key="2">
    <citation type="submission" date="2005-06" db="EMBL/GenBank/DDBJ databases">
        <title>DNA sequences of macaque genes expressed in brain or testis and its evolutionary implications.</title>
        <authorList>
            <consortium name="International consortium for macaque cDNA sequencing and analysis"/>
        </authorList>
    </citation>
    <scope>NUCLEOTIDE SEQUENCE [LARGE SCALE MRNA]</scope>
    <source>
        <tissue>Testis</tissue>
    </source>
</reference>
<proteinExistence type="evidence at transcript level"/>
<accession>Q8HXH6</accession>
<evidence type="ECO:0000250" key="1">
    <source>
        <dbReference type="UniProtKB" id="Q8NAV1"/>
    </source>
</evidence>
<evidence type="ECO:0000255" key="2"/>
<evidence type="ECO:0000256" key="3">
    <source>
        <dbReference type="SAM" id="MobiDB-lite"/>
    </source>
</evidence>
<evidence type="ECO:0000305" key="4"/>
<gene>
    <name type="primary">PRPF38A</name>
    <name type="ORF">QmoA-13838</name>
    <name type="ORF">QtsA-17757</name>
</gene>
<organism>
    <name type="scientific">Macaca fascicularis</name>
    <name type="common">Crab-eating macaque</name>
    <name type="synonym">Cynomolgus monkey</name>
    <dbReference type="NCBI Taxonomy" id="9541"/>
    <lineage>
        <taxon>Eukaryota</taxon>
        <taxon>Metazoa</taxon>
        <taxon>Chordata</taxon>
        <taxon>Craniata</taxon>
        <taxon>Vertebrata</taxon>
        <taxon>Euteleostomi</taxon>
        <taxon>Mammalia</taxon>
        <taxon>Eutheria</taxon>
        <taxon>Euarchontoglires</taxon>
        <taxon>Primates</taxon>
        <taxon>Haplorrhini</taxon>
        <taxon>Catarrhini</taxon>
        <taxon>Cercopithecidae</taxon>
        <taxon>Cercopithecinae</taxon>
        <taxon>Macaca</taxon>
    </lineage>
</organism>
<name>PR38A_MACFA</name>
<sequence>MANRTVKDAHSIHGTNPQYLVEKIIRTRIYESKYWKEECFGLTAELVVDKAMELRFVGGVYGGNIKPTPFLCLTLKMLQIQPEKDIIVEFIKNEDFKYVRMLGALYMRLTGTAIDCYKYLEPLYNDYRKIKSQNRNGEFELMHVDEFIDELLHSERVCDIILPRLQKRYVLEEAEQLEPRVSALEEDMDDVESSEEEEEEDEKLERVPSPDHRRRSYRDLDKPRRSPTLRYRRSRSRSPRRRSRSPKRRSPSPRRERHRSKSPRRHRSRSRDRRHRSRSKSPGHHRSHRHRSHSKSPERSKKSHKKSRRGNE</sequence>
<protein>
    <recommendedName>
        <fullName>Pre-mRNA-splicing factor 38A</fullName>
    </recommendedName>
</protein>